<comment type="function">
    <text evidence="1">Involved in unsaturated fatty acids biosynthesis. Catalyzes the dehydration of short chain beta-hydroxyacyl-ACPs and long chain saturated and unsaturated beta-hydroxyacyl-ACPs.</text>
</comment>
<comment type="catalytic activity">
    <reaction evidence="1">
        <text>a (3R)-hydroxyacyl-[ACP] = a (2E)-enoyl-[ACP] + H2O</text>
        <dbReference type="Rhea" id="RHEA:13097"/>
        <dbReference type="Rhea" id="RHEA-COMP:9925"/>
        <dbReference type="Rhea" id="RHEA-COMP:9945"/>
        <dbReference type="ChEBI" id="CHEBI:15377"/>
        <dbReference type="ChEBI" id="CHEBI:78784"/>
        <dbReference type="ChEBI" id="CHEBI:78827"/>
        <dbReference type="EC" id="4.2.1.59"/>
    </reaction>
</comment>
<comment type="subcellular location">
    <subcellularLocation>
        <location evidence="1">Cytoplasm</location>
    </subcellularLocation>
</comment>
<comment type="similarity">
    <text evidence="1">Belongs to the thioester dehydratase family. FabZ subfamily.</text>
</comment>
<reference key="1">
    <citation type="journal article" date="2006" name="J. Bacteriol.">
        <title>Pathogenomic sequence analysis of Bacillus cereus and Bacillus thuringiensis isolates closely related to Bacillus anthracis.</title>
        <authorList>
            <person name="Han C.S."/>
            <person name="Xie G."/>
            <person name="Challacombe J.F."/>
            <person name="Altherr M.R."/>
            <person name="Bhotika S.S."/>
            <person name="Bruce D."/>
            <person name="Campbell C.S."/>
            <person name="Campbell M.L."/>
            <person name="Chen J."/>
            <person name="Chertkov O."/>
            <person name="Cleland C."/>
            <person name="Dimitrijevic M."/>
            <person name="Doggett N.A."/>
            <person name="Fawcett J.J."/>
            <person name="Glavina T."/>
            <person name="Goodwin L.A."/>
            <person name="Hill K.K."/>
            <person name="Hitchcock P."/>
            <person name="Jackson P.J."/>
            <person name="Keim P."/>
            <person name="Kewalramani A.R."/>
            <person name="Longmire J."/>
            <person name="Lucas S."/>
            <person name="Malfatti S."/>
            <person name="McMurry K."/>
            <person name="Meincke L.J."/>
            <person name="Misra M."/>
            <person name="Moseman B.L."/>
            <person name="Mundt M."/>
            <person name="Munk A.C."/>
            <person name="Okinaka R.T."/>
            <person name="Parson-Quintana B."/>
            <person name="Reilly L.P."/>
            <person name="Richardson P."/>
            <person name="Robinson D.L."/>
            <person name="Rubin E."/>
            <person name="Saunders E."/>
            <person name="Tapia R."/>
            <person name="Tesmer J.G."/>
            <person name="Thayer N."/>
            <person name="Thompson L.S."/>
            <person name="Tice H."/>
            <person name="Ticknor L.O."/>
            <person name="Wills P.L."/>
            <person name="Brettin T.S."/>
            <person name="Gilna P."/>
        </authorList>
    </citation>
    <scope>NUCLEOTIDE SEQUENCE [LARGE SCALE GENOMIC DNA]</scope>
    <source>
        <strain>97-27</strain>
    </source>
</reference>
<feature type="chain" id="PRO_0000091639" description="3-hydroxyacyl-[acyl-carrier-protein] dehydratase FabZ">
    <location>
        <begin position="1"/>
        <end position="144"/>
    </location>
</feature>
<feature type="active site" evidence="1">
    <location>
        <position position="48"/>
    </location>
</feature>
<sequence length="144" mass="15966">MLNIEQIKEIIPHRYPFLLVDKILEVDEGKRAVGIKNVSANEEFFNGHFPDYAVMPGVLIVEALAQVGAVAVLKKEENRGRLAFFAGIDNCRFKKQVRPGDQLRLEVEMTRVRGPIGKGKAIATVDGEVACEAEITFAIGDKKE</sequence>
<keyword id="KW-0963">Cytoplasm</keyword>
<keyword id="KW-0441">Lipid A biosynthesis</keyword>
<keyword id="KW-0444">Lipid biosynthesis</keyword>
<keyword id="KW-0443">Lipid metabolism</keyword>
<keyword id="KW-0456">Lyase</keyword>
<dbReference type="EC" id="4.2.1.59" evidence="1"/>
<dbReference type="EMBL" id="AE017355">
    <property type="protein sequence ID" value="AAT63450.1"/>
    <property type="molecule type" value="Genomic_DNA"/>
</dbReference>
<dbReference type="RefSeq" id="WP_000931959.1">
    <property type="nucleotide sequence ID" value="NC_005957.1"/>
</dbReference>
<dbReference type="RefSeq" id="YP_039270.1">
    <property type="nucleotide sequence ID" value="NC_005957.1"/>
</dbReference>
<dbReference type="SMR" id="Q6HB06"/>
<dbReference type="GeneID" id="75088464"/>
<dbReference type="KEGG" id="btk:BT9727_4961"/>
<dbReference type="PATRIC" id="fig|281309.8.peg.5277"/>
<dbReference type="HOGENOM" id="CLU_078912_3_0_9"/>
<dbReference type="PRO" id="PR:Q6HB06"/>
<dbReference type="Proteomes" id="UP000001301">
    <property type="component" value="Chromosome"/>
</dbReference>
<dbReference type="GO" id="GO:0005737">
    <property type="term" value="C:cytoplasm"/>
    <property type="evidence" value="ECO:0007669"/>
    <property type="project" value="UniProtKB-SubCell"/>
</dbReference>
<dbReference type="GO" id="GO:0016020">
    <property type="term" value="C:membrane"/>
    <property type="evidence" value="ECO:0007669"/>
    <property type="project" value="GOC"/>
</dbReference>
<dbReference type="GO" id="GO:0019171">
    <property type="term" value="F:(3R)-hydroxyacyl-[acyl-carrier-protein] dehydratase activity"/>
    <property type="evidence" value="ECO:0007669"/>
    <property type="project" value="UniProtKB-EC"/>
</dbReference>
<dbReference type="GO" id="GO:0006633">
    <property type="term" value="P:fatty acid biosynthetic process"/>
    <property type="evidence" value="ECO:0007669"/>
    <property type="project" value="UniProtKB-UniRule"/>
</dbReference>
<dbReference type="GO" id="GO:0009245">
    <property type="term" value="P:lipid A biosynthetic process"/>
    <property type="evidence" value="ECO:0007669"/>
    <property type="project" value="UniProtKB-UniRule"/>
</dbReference>
<dbReference type="CDD" id="cd01288">
    <property type="entry name" value="FabZ"/>
    <property type="match status" value="1"/>
</dbReference>
<dbReference type="FunFam" id="3.10.129.10:FF:000001">
    <property type="entry name" value="3-hydroxyacyl-[acyl-carrier-protein] dehydratase FabZ"/>
    <property type="match status" value="1"/>
</dbReference>
<dbReference type="Gene3D" id="3.10.129.10">
    <property type="entry name" value="Hotdog Thioesterase"/>
    <property type="match status" value="1"/>
</dbReference>
<dbReference type="HAMAP" id="MF_00406">
    <property type="entry name" value="FabZ"/>
    <property type="match status" value="1"/>
</dbReference>
<dbReference type="InterPro" id="IPR013114">
    <property type="entry name" value="FabA_FabZ"/>
</dbReference>
<dbReference type="InterPro" id="IPR010084">
    <property type="entry name" value="FabZ"/>
</dbReference>
<dbReference type="InterPro" id="IPR029069">
    <property type="entry name" value="HotDog_dom_sf"/>
</dbReference>
<dbReference type="NCBIfam" id="TIGR01750">
    <property type="entry name" value="fabZ"/>
    <property type="match status" value="1"/>
</dbReference>
<dbReference type="NCBIfam" id="NF000582">
    <property type="entry name" value="PRK00006.1"/>
    <property type="match status" value="1"/>
</dbReference>
<dbReference type="PANTHER" id="PTHR30272">
    <property type="entry name" value="3-HYDROXYACYL-[ACYL-CARRIER-PROTEIN] DEHYDRATASE"/>
    <property type="match status" value="1"/>
</dbReference>
<dbReference type="PANTHER" id="PTHR30272:SF1">
    <property type="entry name" value="3-HYDROXYACYL-[ACYL-CARRIER-PROTEIN] DEHYDRATASE"/>
    <property type="match status" value="1"/>
</dbReference>
<dbReference type="Pfam" id="PF07977">
    <property type="entry name" value="FabA"/>
    <property type="match status" value="1"/>
</dbReference>
<dbReference type="SUPFAM" id="SSF54637">
    <property type="entry name" value="Thioesterase/thiol ester dehydrase-isomerase"/>
    <property type="match status" value="1"/>
</dbReference>
<proteinExistence type="inferred from homology"/>
<evidence type="ECO:0000255" key="1">
    <source>
        <dbReference type="HAMAP-Rule" id="MF_00406"/>
    </source>
</evidence>
<accession>Q6HB06</accession>
<gene>
    <name evidence="1" type="primary">fabZ</name>
    <name type="ordered locus">BT9727_4961</name>
</gene>
<protein>
    <recommendedName>
        <fullName evidence="1">3-hydroxyacyl-[acyl-carrier-protein] dehydratase FabZ</fullName>
        <ecNumber evidence="1">4.2.1.59</ecNumber>
    </recommendedName>
    <alternativeName>
        <fullName evidence="1">(3R)-hydroxymyristoyl-[acyl-carrier-protein] dehydratase</fullName>
        <shortName evidence="1">(3R)-hydroxymyristoyl-ACP dehydrase</shortName>
    </alternativeName>
    <alternativeName>
        <fullName evidence="1">Beta-hydroxyacyl-ACP dehydratase</fullName>
    </alternativeName>
</protein>
<organism>
    <name type="scientific">Bacillus thuringiensis subsp. konkukian (strain 97-27)</name>
    <dbReference type="NCBI Taxonomy" id="281309"/>
    <lineage>
        <taxon>Bacteria</taxon>
        <taxon>Bacillati</taxon>
        <taxon>Bacillota</taxon>
        <taxon>Bacilli</taxon>
        <taxon>Bacillales</taxon>
        <taxon>Bacillaceae</taxon>
        <taxon>Bacillus</taxon>
        <taxon>Bacillus cereus group</taxon>
    </lineage>
</organism>
<name>FABZ_BACHK</name>